<protein>
    <recommendedName>
        <fullName evidence="1">Energy-coupling factor transporter ATP-binding protein EcfA2</fullName>
        <shortName evidence="1">ECF transporter A component EcfA2</shortName>
        <ecNumber evidence="1">7.-.-.-</ecNumber>
    </recommendedName>
</protein>
<proteinExistence type="inferred from homology"/>
<dbReference type="EC" id="7.-.-.-" evidence="1"/>
<dbReference type="EMBL" id="AF222894">
    <property type="protein sequence ID" value="AAF30951.1"/>
    <property type="molecule type" value="Genomic_DNA"/>
</dbReference>
<dbReference type="RefSeq" id="WP_006688554.1">
    <property type="nucleotide sequence ID" value="NC_002162.1"/>
</dbReference>
<dbReference type="SMR" id="Q9PPV2"/>
<dbReference type="STRING" id="273119.UU538"/>
<dbReference type="EnsemblBacteria" id="AAF30951">
    <property type="protein sequence ID" value="AAF30951"/>
    <property type="gene ID" value="UU538"/>
</dbReference>
<dbReference type="GeneID" id="29672424"/>
<dbReference type="KEGG" id="uur:UU538"/>
<dbReference type="eggNOG" id="COG1122">
    <property type="taxonomic scope" value="Bacteria"/>
</dbReference>
<dbReference type="eggNOG" id="COG1132">
    <property type="taxonomic scope" value="Bacteria"/>
</dbReference>
<dbReference type="HOGENOM" id="CLU_000604_1_22_14"/>
<dbReference type="OrthoDB" id="9784332at2"/>
<dbReference type="Proteomes" id="UP000000423">
    <property type="component" value="Chromosome"/>
</dbReference>
<dbReference type="GO" id="GO:0043190">
    <property type="term" value="C:ATP-binding cassette (ABC) transporter complex"/>
    <property type="evidence" value="ECO:0007669"/>
    <property type="project" value="TreeGrafter"/>
</dbReference>
<dbReference type="GO" id="GO:0005524">
    <property type="term" value="F:ATP binding"/>
    <property type="evidence" value="ECO:0007669"/>
    <property type="project" value="UniProtKB-KW"/>
</dbReference>
<dbReference type="GO" id="GO:0016887">
    <property type="term" value="F:ATP hydrolysis activity"/>
    <property type="evidence" value="ECO:0007669"/>
    <property type="project" value="InterPro"/>
</dbReference>
<dbReference type="GO" id="GO:0042626">
    <property type="term" value="F:ATPase-coupled transmembrane transporter activity"/>
    <property type="evidence" value="ECO:0007669"/>
    <property type="project" value="TreeGrafter"/>
</dbReference>
<dbReference type="CDD" id="cd03225">
    <property type="entry name" value="ABC_cobalt_CbiO_domain1"/>
    <property type="match status" value="1"/>
</dbReference>
<dbReference type="Gene3D" id="3.40.50.300">
    <property type="entry name" value="P-loop containing nucleotide triphosphate hydrolases"/>
    <property type="match status" value="2"/>
</dbReference>
<dbReference type="InterPro" id="IPR003593">
    <property type="entry name" value="AAA+_ATPase"/>
</dbReference>
<dbReference type="InterPro" id="IPR003439">
    <property type="entry name" value="ABC_transporter-like_ATP-bd"/>
</dbReference>
<dbReference type="InterPro" id="IPR017871">
    <property type="entry name" value="ABC_transporter-like_CS"/>
</dbReference>
<dbReference type="InterPro" id="IPR015856">
    <property type="entry name" value="ABC_transpr_CbiO/EcfA_su"/>
</dbReference>
<dbReference type="InterPro" id="IPR050095">
    <property type="entry name" value="ECF_ABC_transporter_ATP-bd"/>
</dbReference>
<dbReference type="InterPro" id="IPR027417">
    <property type="entry name" value="P-loop_NTPase"/>
</dbReference>
<dbReference type="NCBIfam" id="NF010153">
    <property type="entry name" value="PRK13631.1"/>
    <property type="match status" value="1"/>
</dbReference>
<dbReference type="PANTHER" id="PTHR43553:SF27">
    <property type="entry name" value="ENERGY-COUPLING FACTOR TRANSPORTER ATP-BINDING PROTEIN ECFA2"/>
    <property type="match status" value="1"/>
</dbReference>
<dbReference type="PANTHER" id="PTHR43553">
    <property type="entry name" value="HEAVY METAL TRANSPORTER"/>
    <property type="match status" value="1"/>
</dbReference>
<dbReference type="Pfam" id="PF00005">
    <property type="entry name" value="ABC_tran"/>
    <property type="match status" value="2"/>
</dbReference>
<dbReference type="SMART" id="SM00382">
    <property type="entry name" value="AAA"/>
    <property type="match status" value="1"/>
</dbReference>
<dbReference type="SUPFAM" id="SSF52540">
    <property type="entry name" value="P-loop containing nucleoside triphosphate hydrolases"/>
    <property type="match status" value="1"/>
</dbReference>
<dbReference type="PROSITE" id="PS00211">
    <property type="entry name" value="ABC_TRANSPORTER_1"/>
    <property type="match status" value="1"/>
</dbReference>
<dbReference type="PROSITE" id="PS50893">
    <property type="entry name" value="ABC_TRANSPORTER_2"/>
    <property type="match status" value="1"/>
</dbReference>
<dbReference type="PROSITE" id="PS51246">
    <property type="entry name" value="CBIO"/>
    <property type="match status" value="1"/>
</dbReference>
<gene>
    <name evidence="1" type="primary">ecfA2</name>
    <name type="synonym">cbiO2</name>
    <name type="ordered locus">UU538</name>
</gene>
<reference key="1">
    <citation type="journal article" date="2000" name="Nature">
        <title>The complete sequence of the mucosal pathogen Ureaplasma urealyticum.</title>
        <authorList>
            <person name="Glass J.I."/>
            <person name="Lefkowitz E.J."/>
            <person name="Glass J.S."/>
            <person name="Heiner C.R."/>
            <person name="Chen E.Y."/>
            <person name="Cassell G.H."/>
        </authorList>
    </citation>
    <scope>NUCLEOTIDE SEQUENCE [LARGE SCALE GENOMIC DNA]</scope>
    <source>
        <strain>ATCC 700970</strain>
    </source>
</reference>
<organism>
    <name type="scientific">Ureaplasma parvum serovar 3 (strain ATCC 700970)</name>
    <dbReference type="NCBI Taxonomy" id="273119"/>
    <lineage>
        <taxon>Bacteria</taxon>
        <taxon>Bacillati</taxon>
        <taxon>Mycoplasmatota</taxon>
        <taxon>Mycoplasmoidales</taxon>
        <taxon>Mycoplasmoidaceae</taxon>
        <taxon>Ureaplasma</taxon>
    </lineage>
</organism>
<name>ECFA2_UREPA</name>
<evidence type="ECO:0000255" key="1">
    <source>
        <dbReference type="HAMAP-Rule" id="MF_01710"/>
    </source>
</evidence>
<keyword id="KW-0067">ATP-binding</keyword>
<keyword id="KW-1003">Cell membrane</keyword>
<keyword id="KW-0472">Membrane</keyword>
<keyword id="KW-0547">Nucleotide-binding</keyword>
<keyword id="KW-1185">Reference proteome</keyword>
<keyword id="KW-1278">Translocase</keyword>
<keyword id="KW-0813">Transport</keyword>
<comment type="function">
    <text evidence="1">ATP-binding (A) component of a common energy-coupling factor (ECF) ABC-transporter complex. Unlike classic ABC transporters this ECF transporter provides the energy necessary to transport a number of different substrates.</text>
</comment>
<comment type="subunit">
    <text evidence="1">Forms a stable energy-coupling factor (ECF) transporter complex composed of 2 membrane-embedded substrate-binding proteins (S component), 2 ATP-binding proteins (A component) and 2 transmembrane proteins (T component).</text>
</comment>
<comment type="subcellular location">
    <subcellularLocation>
        <location evidence="1">Cell membrane</location>
        <topology evidence="1">Peripheral membrane protein</topology>
    </subcellularLocation>
</comment>
<comment type="similarity">
    <text evidence="1">Belongs to the ABC transporter superfamily. Energy-coupling factor EcfA family.</text>
</comment>
<accession>Q9PPV2</accession>
<sequence length="433" mass="50401">MQKLMDYFFKRKLKVPRPISNDISVRVKNLYAVYDEKQENQLVALNNISYDFKKNKIYFIIGNSGSGKSTLVTHFNGLMISRYGFVQVGDIVSGDHFDFERQLLGVIDSYDKKIINLLWRNQLDQWTFLVLFSNEVNIQQARILFEANFKQKPISLKFIKTKNNHELITNPYVRENTKIAVVRVDKNVILEINDKMNYEELQRFEFIKKEIKTNYHLSKKIKRFKELRRRVGFVFQFPEYQLFKDTIEKDIMFGPVNLGVKKSEAKKRAKFYLNKLGLGDDYLERSPFGLSGGQKRRVAIAGILAIQNDILVFDEPTAGLDPAGEHEMMQIILDAKANNKTVFVITHTMEHVLEVADEVIVMDEGEIIKTGTPYEIFFDQHIINSTSIQVPRVIAVINELIKKDLKYEILKQKQPRTIEELADAIIEFKKGEK</sequence>
<feature type="chain" id="PRO_0000092124" description="Energy-coupling factor transporter ATP-binding protein EcfA2">
    <location>
        <begin position="1"/>
        <end position="433"/>
    </location>
</feature>
<feature type="domain" description="ABC transporter" evidence="1">
    <location>
        <begin position="25"/>
        <end position="389"/>
    </location>
</feature>
<feature type="binding site" evidence="1">
    <location>
        <begin position="62"/>
        <end position="69"/>
    </location>
    <ligand>
        <name>ATP</name>
        <dbReference type="ChEBI" id="CHEBI:30616"/>
    </ligand>
</feature>